<sequence length="124" mass="13920">MADSSPEVKAVARYIRMSPFKVRRVLDQIRGRTYADALILLEFMPYAACEPVRKVLRSAVANAEHNNGLDPRDLVISQAYADQGPVLKRFRPRAQGRAYPIRKRTCHITIAVRPIEEAEAATAS</sequence>
<accession>Q2JIM2</accession>
<gene>
    <name evidence="1" type="primary">rplV</name>
    <name evidence="1" type="synonym">rpl22</name>
    <name type="ordered locus">CYB_2602</name>
</gene>
<keyword id="KW-1185">Reference proteome</keyword>
<keyword id="KW-0687">Ribonucleoprotein</keyword>
<keyword id="KW-0689">Ribosomal protein</keyword>
<keyword id="KW-0694">RNA-binding</keyword>
<keyword id="KW-0699">rRNA-binding</keyword>
<evidence type="ECO:0000255" key="1">
    <source>
        <dbReference type="HAMAP-Rule" id="MF_01331"/>
    </source>
</evidence>
<evidence type="ECO:0000305" key="2"/>
<reference key="1">
    <citation type="journal article" date="2007" name="ISME J.">
        <title>Population level functional diversity in a microbial community revealed by comparative genomic and metagenomic analyses.</title>
        <authorList>
            <person name="Bhaya D."/>
            <person name="Grossman A.R."/>
            <person name="Steunou A.-S."/>
            <person name="Khuri N."/>
            <person name="Cohan F.M."/>
            <person name="Hamamura N."/>
            <person name="Melendrez M.C."/>
            <person name="Bateson M.M."/>
            <person name="Ward D.M."/>
            <person name="Heidelberg J.F."/>
        </authorList>
    </citation>
    <scope>NUCLEOTIDE SEQUENCE [LARGE SCALE GENOMIC DNA]</scope>
    <source>
        <strain>JA-2-3B'a(2-13)</strain>
    </source>
</reference>
<feature type="chain" id="PRO_0000243218" description="Large ribosomal subunit protein uL22">
    <location>
        <begin position="1"/>
        <end position="124"/>
    </location>
</feature>
<protein>
    <recommendedName>
        <fullName evidence="1">Large ribosomal subunit protein uL22</fullName>
    </recommendedName>
    <alternativeName>
        <fullName evidence="2">50S ribosomal protein L22</fullName>
    </alternativeName>
</protein>
<name>RL22_SYNJB</name>
<organism>
    <name type="scientific">Synechococcus sp. (strain JA-2-3B'a(2-13))</name>
    <name type="common">Cyanobacteria bacterium Yellowstone B-Prime</name>
    <dbReference type="NCBI Taxonomy" id="321332"/>
    <lineage>
        <taxon>Bacteria</taxon>
        <taxon>Bacillati</taxon>
        <taxon>Cyanobacteriota</taxon>
        <taxon>Cyanophyceae</taxon>
        <taxon>Synechococcales</taxon>
        <taxon>Synechococcaceae</taxon>
        <taxon>Synechococcus</taxon>
    </lineage>
</organism>
<comment type="function">
    <text evidence="1">This protein binds specifically to 23S rRNA; its binding is stimulated by other ribosomal proteins, e.g. L4, L17, and L20. It is important during the early stages of 50S assembly. It makes multiple contacts with different domains of the 23S rRNA in the assembled 50S subunit and ribosome (By similarity).</text>
</comment>
<comment type="function">
    <text evidence="1">The globular domain of the protein is located near the polypeptide exit tunnel on the outside of the subunit, while an extended beta-hairpin is found that lines the wall of the exit tunnel in the center of the 70S ribosome.</text>
</comment>
<comment type="subunit">
    <text evidence="1">Part of the 50S ribosomal subunit.</text>
</comment>
<comment type="similarity">
    <text evidence="1">Belongs to the universal ribosomal protein uL22 family.</text>
</comment>
<dbReference type="EMBL" id="CP000240">
    <property type="protein sequence ID" value="ABD03532.1"/>
    <property type="molecule type" value="Genomic_DNA"/>
</dbReference>
<dbReference type="RefSeq" id="WP_011434157.1">
    <property type="nucleotide sequence ID" value="NC_007776.1"/>
</dbReference>
<dbReference type="SMR" id="Q2JIM2"/>
<dbReference type="STRING" id="321332.CYB_2602"/>
<dbReference type="KEGG" id="cyb:CYB_2602"/>
<dbReference type="eggNOG" id="COG0091">
    <property type="taxonomic scope" value="Bacteria"/>
</dbReference>
<dbReference type="HOGENOM" id="CLU_083987_3_3_3"/>
<dbReference type="OrthoDB" id="9805969at2"/>
<dbReference type="Proteomes" id="UP000001938">
    <property type="component" value="Chromosome"/>
</dbReference>
<dbReference type="GO" id="GO:0022625">
    <property type="term" value="C:cytosolic large ribosomal subunit"/>
    <property type="evidence" value="ECO:0007669"/>
    <property type="project" value="TreeGrafter"/>
</dbReference>
<dbReference type="GO" id="GO:0019843">
    <property type="term" value="F:rRNA binding"/>
    <property type="evidence" value="ECO:0007669"/>
    <property type="project" value="UniProtKB-UniRule"/>
</dbReference>
<dbReference type="GO" id="GO:0003735">
    <property type="term" value="F:structural constituent of ribosome"/>
    <property type="evidence" value="ECO:0007669"/>
    <property type="project" value="InterPro"/>
</dbReference>
<dbReference type="GO" id="GO:0006412">
    <property type="term" value="P:translation"/>
    <property type="evidence" value="ECO:0007669"/>
    <property type="project" value="UniProtKB-UniRule"/>
</dbReference>
<dbReference type="CDD" id="cd00336">
    <property type="entry name" value="Ribosomal_L22"/>
    <property type="match status" value="1"/>
</dbReference>
<dbReference type="FunFam" id="3.90.470.10:FF:000004">
    <property type="entry name" value="50S ribosomal protein L22, chloroplastic"/>
    <property type="match status" value="1"/>
</dbReference>
<dbReference type="Gene3D" id="3.90.470.10">
    <property type="entry name" value="Ribosomal protein L22/L17"/>
    <property type="match status" value="1"/>
</dbReference>
<dbReference type="HAMAP" id="MF_01331_B">
    <property type="entry name" value="Ribosomal_uL22_B"/>
    <property type="match status" value="1"/>
</dbReference>
<dbReference type="InterPro" id="IPR001063">
    <property type="entry name" value="Ribosomal_uL22"/>
</dbReference>
<dbReference type="InterPro" id="IPR005727">
    <property type="entry name" value="Ribosomal_uL22_bac/chlpt-type"/>
</dbReference>
<dbReference type="InterPro" id="IPR047867">
    <property type="entry name" value="Ribosomal_uL22_bac/org-type"/>
</dbReference>
<dbReference type="InterPro" id="IPR018260">
    <property type="entry name" value="Ribosomal_uL22_CS"/>
</dbReference>
<dbReference type="InterPro" id="IPR036394">
    <property type="entry name" value="Ribosomal_uL22_sf"/>
</dbReference>
<dbReference type="NCBIfam" id="TIGR01044">
    <property type="entry name" value="rplV_bact"/>
    <property type="match status" value="1"/>
</dbReference>
<dbReference type="PANTHER" id="PTHR13501">
    <property type="entry name" value="CHLOROPLAST 50S RIBOSOMAL PROTEIN L22-RELATED"/>
    <property type="match status" value="1"/>
</dbReference>
<dbReference type="PANTHER" id="PTHR13501:SF8">
    <property type="entry name" value="LARGE RIBOSOMAL SUBUNIT PROTEIN UL22M"/>
    <property type="match status" value="1"/>
</dbReference>
<dbReference type="Pfam" id="PF00237">
    <property type="entry name" value="Ribosomal_L22"/>
    <property type="match status" value="1"/>
</dbReference>
<dbReference type="SUPFAM" id="SSF54843">
    <property type="entry name" value="Ribosomal protein L22"/>
    <property type="match status" value="1"/>
</dbReference>
<dbReference type="PROSITE" id="PS00464">
    <property type="entry name" value="RIBOSOMAL_L22"/>
    <property type="match status" value="1"/>
</dbReference>
<proteinExistence type="inferred from homology"/>